<evidence type="ECO:0000250" key="1"/>
<evidence type="ECO:0000250" key="2">
    <source>
        <dbReference type="UniProtKB" id="Q53G59"/>
    </source>
</evidence>
<evidence type="ECO:0000255" key="3">
    <source>
        <dbReference type="PROSITE-ProRule" id="PRU00037"/>
    </source>
</evidence>
<accession>E1B932</accession>
<dbReference type="EMBL" id="DAAA02043311">
    <property type="status" value="NOT_ANNOTATED_CDS"/>
    <property type="molecule type" value="Genomic_DNA"/>
</dbReference>
<dbReference type="SMR" id="E1B932"/>
<dbReference type="FunCoup" id="E1B932">
    <property type="interactions" value="1870"/>
</dbReference>
<dbReference type="STRING" id="9913.ENSBTAP00000040061"/>
<dbReference type="PaxDb" id="9913-ENSBTAP00000040061"/>
<dbReference type="eggNOG" id="KOG4441">
    <property type="taxonomic scope" value="Eukaryota"/>
</dbReference>
<dbReference type="HOGENOM" id="CLU_004253_14_2_1"/>
<dbReference type="InParanoid" id="E1B932"/>
<dbReference type="OrthoDB" id="45365at2759"/>
<dbReference type="TreeFam" id="TF329218"/>
<dbReference type="UniPathway" id="UPA00143"/>
<dbReference type="Proteomes" id="UP000009136">
    <property type="component" value="Unplaced"/>
</dbReference>
<dbReference type="GO" id="GO:0030127">
    <property type="term" value="C:COPII vesicle coat"/>
    <property type="evidence" value="ECO:0000250"/>
    <property type="project" value="UniProtKB"/>
</dbReference>
<dbReference type="GO" id="GO:0030134">
    <property type="term" value="C:COPII-coated ER to Golgi transport vesicle"/>
    <property type="evidence" value="ECO:0000250"/>
    <property type="project" value="UniProtKB"/>
</dbReference>
<dbReference type="GO" id="GO:0031463">
    <property type="term" value="C:Cul3-RING ubiquitin ligase complex"/>
    <property type="evidence" value="ECO:0000250"/>
    <property type="project" value="UniProtKB"/>
</dbReference>
<dbReference type="GO" id="GO:0005737">
    <property type="term" value="C:cytoplasm"/>
    <property type="evidence" value="ECO:0000318"/>
    <property type="project" value="GO_Central"/>
</dbReference>
<dbReference type="GO" id="GO:1990756">
    <property type="term" value="F:ubiquitin-like ligase-substrate adaptor activity"/>
    <property type="evidence" value="ECO:0000318"/>
    <property type="project" value="GO_Central"/>
</dbReference>
<dbReference type="GO" id="GO:0048208">
    <property type="term" value="P:COPII vesicle coating"/>
    <property type="evidence" value="ECO:0000250"/>
    <property type="project" value="UniProtKB"/>
</dbReference>
<dbReference type="GO" id="GO:0006888">
    <property type="term" value="P:endoplasmic reticulum to Golgi vesicle-mediated transport"/>
    <property type="evidence" value="ECO:0000250"/>
    <property type="project" value="UniProtKB"/>
</dbReference>
<dbReference type="GO" id="GO:0014032">
    <property type="term" value="P:neural crest cell development"/>
    <property type="evidence" value="ECO:0000250"/>
    <property type="project" value="UniProtKB"/>
</dbReference>
<dbReference type="GO" id="GO:0014029">
    <property type="term" value="P:neural crest formation"/>
    <property type="evidence" value="ECO:0000250"/>
    <property type="project" value="UniProtKB"/>
</dbReference>
<dbReference type="GO" id="GO:0043161">
    <property type="term" value="P:proteasome-mediated ubiquitin-dependent protein catabolic process"/>
    <property type="evidence" value="ECO:0000318"/>
    <property type="project" value="GO_Central"/>
</dbReference>
<dbReference type="GO" id="GO:0006513">
    <property type="term" value="P:protein monoubiquitination"/>
    <property type="evidence" value="ECO:0000250"/>
    <property type="project" value="UniProtKB"/>
</dbReference>
<dbReference type="GO" id="GO:0016055">
    <property type="term" value="P:Wnt signaling pathway"/>
    <property type="evidence" value="ECO:0000250"/>
    <property type="project" value="UniProtKB"/>
</dbReference>
<dbReference type="CDD" id="cd18452">
    <property type="entry name" value="BACK_KLHL12"/>
    <property type="match status" value="1"/>
</dbReference>
<dbReference type="CDD" id="cd18242">
    <property type="entry name" value="BTB_POZ_KLHL12_C3IP1_DKIR"/>
    <property type="match status" value="1"/>
</dbReference>
<dbReference type="FunFam" id="2.120.10.80:FF:000011">
    <property type="entry name" value="Kelch like family member 12"/>
    <property type="match status" value="1"/>
</dbReference>
<dbReference type="FunFam" id="1.25.40.420:FF:000001">
    <property type="entry name" value="Kelch-like family member 12"/>
    <property type="match status" value="1"/>
</dbReference>
<dbReference type="FunFam" id="3.30.710.10:FF:000001">
    <property type="entry name" value="Kelch-like family member 20"/>
    <property type="match status" value="1"/>
</dbReference>
<dbReference type="Gene3D" id="1.25.40.420">
    <property type="match status" value="1"/>
</dbReference>
<dbReference type="Gene3D" id="2.120.10.80">
    <property type="entry name" value="Kelch-type beta propeller"/>
    <property type="match status" value="1"/>
</dbReference>
<dbReference type="Gene3D" id="3.30.710.10">
    <property type="entry name" value="Potassium Channel Kv1.1, Chain A"/>
    <property type="match status" value="1"/>
</dbReference>
<dbReference type="InterPro" id="IPR011705">
    <property type="entry name" value="BACK"/>
</dbReference>
<dbReference type="InterPro" id="IPR017096">
    <property type="entry name" value="BTB-kelch_protein"/>
</dbReference>
<dbReference type="InterPro" id="IPR000210">
    <property type="entry name" value="BTB/POZ_dom"/>
</dbReference>
<dbReference type="InterPro" id="IPR011043">
    <property type="entry name" value="Gal_Oxase/kelch_b-propeller"/>
</dbReference>
<dbReference type="InterPro" id="IPR015915">
    <property type="entry name" value="Kelch-typ_b-propeller"/>
</dbReference>
<dbReference type="InterPro" id="IPR006652">
    <property type="entry name" value="Kelch_1"/>
</dbReference>
<dbReference type="InterPro" id="IPR011333">
    <property type="entry name" value="SKP1/BTB/POZ_sf"/>
</dbReference>
<dbReference type="PANTHER" id="PTHR24412">
    <property type="entry name" value="KELCH PROTEIN"/>
    <property type="match status" value="1"/>
</dbReference>
<dbReference type="PANTHER" id="PTHR24412:SF494">
    <property type="entry name" value="KELCH-LIKE PROTEIN 12"/>
    <property type="match status" value="1"/>
</dbReference>
<dbReference type="Pfam" id="PF07707">
    <property type="entry name" value="BACK"/>
    <property type="match status" value="1"/>
</dbReference>
<dbReference type="Pfam" id="PF00651">
    <property type="entry name" value="BTB"/>
    <property type="match status" value="1"/>
</dbReference>
<dbReference type="Pfam" id="PF01344">
    <property type="entry name" value="Kelch_1"/>
    <property type="match status" value="6"/>
</dbReference>
<dbReference type="PIRSF" id="PIRSF037037">
    <property type="entry name" value="Kelch-like_protein_gigaxonin"/>
    <property type="match status" value="1"/>
</dbReference>
<dbReference type="PRINTS" id="PR00501">
    <property type="entry name" value="KELCHREPEAT"/>
</dbReference>
<dbReference type="SMART" id="SM00875">
    <property type="entry name" value="BACK"/>
    <property type="match status" value="1"/>
</dbReference>
<dbReference type="SMART" id="SM00225">
    <property type="entry name" value="BTB"/>
    <property type="match status" value="1"/>
</dbReference>
<dbReference type="SMART" id="SM00612">
    <property type="entry name" value="Kelch"/>
    <property type="match status" value="6"/>
</dbReference>
<dbReference type="SUPFAM" id="SSF50965">
    <property type="entry name" value="Galactose oxidase, central domain"/>
    <property type="match status" value="1"/>
</dbReference>
<dbReference type="SUPFAM" id="SSF54695">
    <property type="entry name" value="POZ domain"/>
    <property type="match status" value="1"/>
</dbReference>
<dbReference type="PROSITE" id="PS50097">
    <property type="entry name" value="BTB"/>
    <property type="match status" value="1"/>
</dbReference>
<proteinExistence type="inferred from homology"/>
<name>KLH12_BOVIN</name>
<sequence>MRGIMAPKDIMTNTHAKSILNSMNSLRKSNTLCDVTLRVEQKDFPAHRIVLAACSDYFCAMFTSELSEKGKPYVDIQGLTASTMEILLDFVYTETVHVTVENVQELLPAACLLQLKGVKQACCEFLESQLDPSNCLGIRDFAETHNCVDLMQAAEVFSQKHFPEVVQHEEFILLSQGEVEKLIKCDEIQVDSEEPVFEAVISWVKHAKKEREGSLPDLLQYVRMPLLTPRYITDVIDTEPFIRCSLQCRDLVDEAKKFHLRPELRTQMQGPRTRAHIRANEVLLVVGGFGSQQSPIDVVEKYDPKTQEWSFLPSITRKRRYVASVSLHDRIYVIGGYDGRSRLSSVECLDYTADEDGVWYSVAPMNVRRGLAGATTLGDMIYVSGGFDGSRRHTSMERYDPNIDQWSMLGDMQTAREGAGLVVASGVIYCLGGYDGLNILNSVEKYDPHTGHWANVTPMATKRSGAGVALLNDHIYVVGGFDGTAHLSSVEAYNIRTDSWTTVTSMTTPRCYVGATVLRGRLYAIAGYDGNSSLSSIECYDPIIDSYGLVTSMGTQRCDAGVCALREK</sequence>
<comment type="function">
    <text evidence="2">Substrate-specific adapter of a BCR (BTB-CUL3-RBX1) E3 ubiquitin ligase complex that acts as a negative regulator of Wnt signaling pathway and ER-Golgi transport. The BCR(KLHL12) complex is involved in ER-Golgi transport by regulating the size of COPII coats, thereby playing a key role in collagen export, which is required for embryonic stem (ES) cells division: BCR(KLHL12) acts by mediating monoubiquitination of SEC31 (SEC31A or SEC31B). The BCR(KLHL12) complex is also involved in neural crest specification: in response to cytosolic calcium increase, interacts with the heterodimer formed with PEF1 and PDCD6/ALG-2, leading to bridge together the BCR(KLHL12) complex and SEC31 (SEC31A or SEC31B), promoting monoubiquitination of SEC31 and subsequent collagen export. As part of the BCR(KLHL12) complex, also acts as a negative regulator of the Wnt signaling pathway by mediating ubiquitination and subsequent proteolysis of DVL3. The BCR(KLHL12) complex also mediates polyubiquitination of DRD4 and PEF1, without leading to degradation of these proteins.</text>
</comment>
<comment type="pathway">
    <text>Protein modification; protein ubiquitination.</text>
</comment>
<comment type="subunit">
    <text evidence="2">Component of the BCR(KLHL12) E3 ubiquitin ligase complex, at least composed of CUL3 and KLHL12 and RBX1. This complex interacts with DVL3 upon activation of the Wnt signaling pathway by WNT3A. Interacts with DRD4, KLHL2 and SEC31A. Interacts with PEF1 and PDCD6/ALG-2; interaction takes place in response to cytosolic calcium increase and leads to bridge together the BCR(KLHL12) complex and SEC31 (SEC31A or SEC31B).</text>
</comment>
<comment type="subcellular location">
    <subcellularLocation>
        <location evidence="2">Cytoplasmic vesicle</location>
        <location evidence="2">COPII-coated vesicle</location>
    </subcellularLocation>
</comment>
<comment type="domain">
    <text evidence="1">The BTB domain is required for interaction with CUL3.</text>
</comment>
<comment type="PTM">
    <text evidence="2">Ubiquitinated by the SCF(FBXL17) complex, leading to its degradation by the proteasome: ubiquitination by the SCF(FBXL17) complex takes place when aberrant BTB domain dimers are formed.</text>
</comment>
<organism>
    <name type="scientific">Bos taurus</name>
    <name type="common">Bovine</name>
    <dbReference type="NCBI Taxonomy" id="9913"/>
    <lineage>
        <taxon>Eukaryota</taxon>
        <taxon>Metazoa</taxon>
        <taxon>Chordata</taxon>
        <taxon>Craniata</taxon>
        <taxon>Vertebrata</taxon>
        <taxon>Euteleostomi</taxon>
        <taxon>Mammalia</taxon>
        <taxon>Eutheria</taxon>
        <taxon>Laurasiatheria</taxon>
        <taxon>Artiodactyla</taxon>
        <taxon>Ruminantia</taxon>
        <taxon>Pecora</taxon>
        <taxon>Bovidae</taxon>
        <taxon>Bovinae</taxon>
        <taxon>Bos</taxon>
    </lineage>
</organism>
<keyword id="KW-0968">Cytoplasmic vesicle</keyword>
<keyword id="KW-0931">ER-Golgi transport</keyword>
<keyword id="KW-0880">Kelch repeat</keyword>
<keyword id="KW-1185">Reference proteome</keyword>
<keyword id="KW-0677">Repeat</keyword>
<keyword id="KW-0813">Transport</keyword>
<keyword id="KW-0832">Ubl conjugation</keyword>
<keyword id="KW-0833">Ubl conjugation pathway</keyword>
<keyword id="KW-0879">Wnt signaling pathway</keyword>
<protein>
    <recommendedName>
        <fullName>Kelch-like protein 12</fullName>
    </recommendedName>
</protein>
<reference key="1">
    <citation type="journal article" date="2009" name="Genome Biol.">
        <title>A whole-genome assembly of the domestic cow, Bos taurus.</title>
        <authorList>
            <person name="Zimin A.V."/>
            <person name="Delcher A.L."/>
            <person name="Florea L."/>
            <person name="Kelley D.R."/>
            <person name="Schatz M.C."/>
            <person name="Puiu D."/>
            <person name="Hanrahan F."/>
            <person name="Pertea G."/>
            <person name="Van Tassell C.P."/>
            <person name="Sonstegard T.S."/>
            <person name="Marcais G."/>
            <person name="Roberts M."/>
            <person name="Subramanian P."/>
            <person name="Yorke J.A."/>
            <person name="Salzberg S.L."/>
        </authorList>
    </citation>
    <scope>NUCLEOTIDE SEQUENCE [LARGE SCALE GENOMIC DNA]</scope>
    <source>
        <strain>Hereford</strain>
    </source>
</reference>
<feature type="chain" id="PRO_0000416892" description="Kelch-like protein 12">
    <location>
        <begin position="1"/>
        <end position="568"/>
    </location>
</feature>
<feature type="domain" description="BTB" evidence="3">
    <location>
        <begin position="33"/>
        <end position="100"/>
    </location>
</feature>
<feature type="domain" description="BACK">
    <location>
        <begin position="135"/>
        <end position="236"/>
    </location>
</feature>
<feature type="repeat" description="Kelch 1">
    <location>
        <begin position="282"/>
        <end position="329"/>
    </location>
</feature>
<feature type="repeat" description="Kelch 2">
    <location>
        <begin position="331"/>
        <end position="379"/>
    </location>
</feature>
<feature type="repeat" description="Kelch 3">
    <location>
        <begin position="380"/>
        <end position="426"/>
    </location>
</feature>
<feature type="repeat" description="Kelch 4">
    <location>
        <begin position="427"/>
        <end position="473"/>
    </location>
</feature>
<feature type="repeat" description="Kelch 5">
    <location>
        <begin position="474"/>
        <end position="520"/>
    </location>
</feature>
<feature type="repeat" description="Kelch 6">
    <location>
        <begin position="522"/>
        <end position="567"/>
    </location>
</feature>
<gene>
    <name type="primary">KLHL12</name>
</gene>